<dbReference type="EMBL" id="BX548174">
    <property type="protein sequence ID" value="CAE18521.1"/>
    <property type="status" value="ALT_INIT"/>
    <property type="molecule type" value="Genomic_DNA"/>
</dbReference>
<dbReference type="RefSeq" id="WP_036930392.1">
    <property type="nucleotide sequence ID" value="NC_005072.1"/>
</dbReference>
<dbReference type="SMR" id="Q7V3L3"/>
<dbReference type="STRING" id="59919.PMM0062"/>
<dbReference type="KEGG" id="pmm:PMM0062"/>
<dbReference type="HOGENOM" id="CLU_209178_0_0_3"/>
<dbReference type="Proteomes" id="UP000001026">
    <property type="component" value="Chromosome"/>
</dbReference>
<dbReference type="GO" id="GO:0009523">
    <property type="term" value="C:photosystem II"/>
    <property type="evidence" value="ECO:0007669"/>
    <property type="project" value="UniProtKB-KW"/>
</dbReference>
<dbReference type="GO" id="GO:0031676">
    <property type="term" value="C:plasma membrane-derived thylakoid membrane"/>
    <property type="evidence" value="ECO:0007669"/>
    <property type="project" value="UniProtKB-SubCell"/>
</dbReference>
<dbReference type="GO" id="GO:0015979">
    <property type="term" value="P:photosynthesis"/>
    <property type="evidence" value="ECO:0007669"/>
    <property type="project" value="UniProtKB-KW"/>
</dbReference>
<dbReference type="HAMAP" id="MF_01388">
    <property type="entry name" value="PSII_PsbX_2"/>
    <property type="match status" value="1"/>
</dbReference>
<dbReference type="InterPro" id="IPR009518">
    <property type="entry name" value="PSII_PsbX"/>
</dbReference>
<dbReference type="InterPro" id="IPR023428">
    <property type="entry name" value="PSII_PsbX_type_2_subfam"/>
</dbReference>
<dbReference type="Pfam" id="PF06596">
    <property type="entry name" value="PsbX"/>
    <property type="match status" value="1"/>
</dbReference>
<sequence length="62" mass="6599">MIQISNLILAADVSPEVAGSSGFNMIASFFAAALLIVIPAAAFLIFVSQKDSLERTSATRRR</sequence>
<evidence type="ECO:0000255" key="1">
    <source>
        <dbReference type="HAMAP-Rule" id="MF_01388"/>
    </source>
</evidence>
<evidence type="ECO:0000305" key="2"/>
<protein>
    <recommendedName>
        <fullName evidence="1">Photosystem II reaction center X protein</fullName>
    </recommendedName>
</protein>
<gene>
    <name evidence="1" type="primary">psbX</name>
    <name type="ordered locus">PMM0062</name>
</gene>
<reference key="1">
    <citation type="journal article" date="2003" name="Nature">
        <title>Genome divergence in two Prochlorococcus ecotypes reflects oceanic niche differentiation.</title>
        <authorList>
            <person name="Rocap G."/>
            <person name="Larimer F.W."/>
            <person name="Lamerdin J.E."/>
            <person name="Malfatti S."/>
            <person name="Chain P."/>
            <person name="Ahlgren N.A."/>
            <person name="Arellano A."/>
            <person name="Coleman M."/>
            <person name="Hauser L."/>
            <person name="Hess W.R."/>
            <person name="Johnson Z.I."/>
            <person name="Land M.L."/>
            <person name="Lindell D."/>
            <person name="Post A.F."/>
            <person name="Regala W."/>
            <person name="Shah M."/>
            <person name="Shaw S.L."/>
            <person name="Steglich C."/>
            <person name="Sullivan M.B."/>
            <person name="Ting C.S."/>
            <person name="Tolonen A."/>
            <person name="Webb E.A."/>
            <person name="Zinser E.R."/>
            <person name="Chisholm S.W."/>
        </authorList>
    </citation>
    <scope>NUCLEOTIDE SEQUENCE [LARGE SCALE GENOMIC DNA]</scope>
    <source>
        <strain>CCMP1986 / NIES-2087 / MED4</strain>
    </source>
</reference>
<accession>Q7V3L3</accession>
<feature type="chain" id="PRO_0000345376" description="Photosystem II reaction center X protein">
    <location>
        <begin position="1"/>
        <end position="62"/>
    </location>
</feature>
<feature type="transmembrane region" description="Helical" evidence="1">
    <location>
        <begin position="26"/>
        <end position="46"/>
    </location>
</feature>
<comment type="function">
    <text evidence="1">Involved in the binding and/or turnover of quinones at the Q(B) site of Photosystem II.</text>
</comment>
<comment type="subunit">
    <text evidence="1">PSII consists of a core antenna complex that captures photons, and an electron transfer chain that converts photonic excitation into a charge separation. PSII forms dimeric complexes.</text>
</comment>
<comment type="subcellular location">
    <subcellularLocation>
        <location evidence="1">Cellular thylakoid membrane</location>
        <topology evidence="1">Single-pass membrane protein</topology>
    </subcellularLocation>
</comment>
<comment type="similarity">
    <text evidence="1">Belongs to the PsbX family. Type 2 subfamily.</text>
</comment>
<comment type="sequence caution" evidence="2">
    <conflict type="erroneous initiation">
        <sequence resource="EMBL-CDS" id="CAE18521"/>
    </conflict>
</comment>
<keyword id="KW-0472">Membrane</keyword>
<keyword id="KW-0602">Photosynthesis</keyword>
<keyword id="KW-0604">Photosystem II</keyword>
<keyword id="KW-0793">Thylakoid</keyword>
<keyword id="KW-0812">Transmembrane</keyword>
<keyword id="KW-1133">Transmembrane helix</keyword>
<name>PSBX_PROMP</name>
<organism>
    <name type="scientific">Prochlorococcus marinus subsp. pastoris (strain CCMP1986 / NIES-2087 / MED4)</name>
    <dbReference type="NCBI Taxonomy" id="59919"/>
    <lineage>
        <taxon>Bacteria</taxon>
        <taxon>Bacillati</taxon>
        <taxon>Cyanobacteriota</taxon>
        <taxon>Cyanophyceae</taxon>
        <taxon>Synechococcales</taxon>
        <taxon>Prochlorococcaceae</taxon>
        <taxon>Prochlorococcus</taxon>
    </lineage>
</organism>
<proteinExistence type="inferred from homology"/>